<sequence>MAELSTRYNLPANVTENSINLDLNSTARWIKEPSVGGWTVKWGNFVFHIPNTGMTLLHHLKSNFVVPEWQQTRNLFSHLFKNPKSTIIEPFLALRILLGVALKDQELQQSLIPGFRSIVHMLSEWLLLEVTSAIHISPNLLGIYLTSDMFKILMAGVKNFFNKMFTLHVVNDHGKPSSIEIKLTGQQIIITRVNMGFLVEVRRIDIEPCCGETVLSESVVFGLVAEAVLREHSQMEKGQPLNLTQYMNSKIAI</sequence>
<evidence type="ECO:0000269" key="1">
    <source>
    </source>
</evidence>
<evidence type="ECO:0000269" key="2">
    <source>
    </source>
</evidence>
<evidence type="ECO:0000303" key="3">
    <source>
    </source>
</evidence>
<evidence type="ECO:0000305" key="4"/>
<evidence type="ECO:0007744" key="5">
    <source>
        <dbReference type="PDB" id="4OR8"/>
    </source>
</evidence>
<evidence type="ECO:0007829" key="6">
    <source>
        <dbReference type="PDB" id="4OR8"/>
    </source>
</evidence>
<reference key="1">
    <citation type="journal article" date="1992" name="Virus Res.">
        <title>Marburg virus, a filovirus: messenger RNAs, gene order, and regulatory elements of the replication cycle.</title>
        <authorList>
            <person name="Feldmann H."/>
            <person name="Muehlberger E."/>
            <person name="Randolf A."/>
            <person name="Will C."/>
            <person name="Kiley M.P."/>
            <person name="Sanchez A."/>
            <person name="Klenk H.-D."/>
        </authorList>
    </citation>
    <scope>NUCLEOTIDE SEQUENCE [MRNA]</scope>
</reference>
<reference key="2">
    <citation type="submission" date="1994-09" db="EMBL/GenBank/DDBJ databases">
        <authorList>
            <person name="Feldmann H."/>
        </authorList>
    </citation>
    <scope>SEQUENCE REVISION</scope>
</reference>
<reference key="3">
    <citation type="submission" date="2003-10" db="EMBL/GenBank/DDBJ databases">
        <authorList>
            <person name="Chain P.S.G."/>
            <person name="Malfatti S.A."/>
            <person name="Hajjaj A."/>
            <person name="Vergez L.M."/>
            <person name="Do L.H."/>
            <person name="Smith K.L."/>
            <person name="McCready P.M."/>
        </authorList>
    </citation>
    <scope>NUCLEOTIDE SEQUENCE [GENOMIC RNA]</scope>
    <source>
        <strain>pp3/guinea pig lethal</strain>
        <strain>pp4/guinea pig nonlethal</strain>
    </source>
</reference>
<reference key="4">
    <citation type="submission" date="2003-10" db="EMBL/GenBank/DDBJ databases">
        <authorList>
            <person name="Ichou M.A."/>
            <person name="Paragas J."/>
            <person name="Jahrling P.B."/>
            <person name="Ibrahim M.S."/>
            <person name="Lofts L."/>
            <person name="Hevey M."/>
            <person name="Schmaljohn A."/>
        </authorList>
    </citation>
    <scope>NUCLEOTIDE SEQUENCE [GENOMIC RNA]</scope>
    <source>
        <strain>pp3/guinea pig lethal</strain>
        <strain>pp4/guinea pig nonlethal</strain>
    </source>
</reference>
<reference key="5">
    <citation type="journal article" date="2006" name="J. Virol.">
        <title>Rescue of recombinant Marburg virus from cDNA is dependent on nucleocapsid protein VP30.</title>
        <authorList>
            <person name="Enterlein S."/>
            <person name="Volchkov V."/>
            <person name="Weik M."/>
            <person name="Kolesnikova L."/>
            <person name="Volchkova V."/>
            <person name="Klenk H.-D."/>
            <person name="Muehlberger E."/>
        </authorList>
    </citation>
    <scope>NUCLEOTIDE SEQUENCE [GENOMIC RNA]</scope>
    <source>
        <strain>Isolate Enterlein</strain>
    </source>
</reference>
<reference key="6">
    <citation type="journal article" date="2005" name="J. Virol.">
        <title>VP24 of Marburg virus influences formation of infectious particles.</title>
        <authorList>
            <person name="Bamberg S."/>
            <person name="Kolesnikova L."/>
            <person name="Moeller P."/>
            <person name="Klenk H.-D."/>
            <person name="Becker S."/>
        </authorList>
    </citation>
    <scope>FUNCTION</scope>
    <scope>SUBUNIT</scope>
    <scope>SUBCELLULAR LOCATION</scope>
    <scope>INTERACTION WITH THE NUCLEOPROTEIN</scope>
</reference>
<reference key="7">
    <citation type="journal article" date="2016" name="J. Virol.">
        <title>Effects of Filovirus Interferon Antagonists on Responses of Human Monocyte-Derived Dendritic Cells to RNA Virus Infection.</title>
        <authorList>
            <person name="Yen B.C."/>
            <person name="Basler C.F."/>
        </authorList>
    </citation>
    <scope>FUNCTION</scope>
    <scope>NOMENCLATURE</scope>
</reference>
<reference evidence="5" key="8">
    <citation type="journal article" date="2014" name="J. Virol.">
        <title>Crystal structure of Marburg virus VP24.</title>
        <authorList>
            <person name="Zhang A.P."/>
            <person name="Bornholdt Z.A."/>
            <person name="Abelson D.M."/>
            <person name="Saphire E.O."/>
        </authorList>
    </citation>
    <scope>X-RAY CRYSTALLOGRAPHY (2.65 ANGSTROMS)</scope>
</reference>
<keyword id="KW-0002">3D-structure</keyword>
<keyword id="KW-1032">Host cell membrane</keyword>
<keyword id="KW-1043">Host membrane</keyword>
<keyword id="KW-0472">Membrane</keyword>
<keyword id="KW-1185">Reference proteome</keyword>
<keyword id="KW-0468">Viral matrix protein</keyword>
<keyword id="KW-0946">Virion</keyword>
<proteinExistence type="evidence at protein level"/>
<protein>
    <recommendedName>
        <fullName>Membrane-associated protein VP24</fullName>
    </recommendedName>
    <alternativeName>
        <fullName evidence="3">Marburg VP24</fullName>
        <shortName evidence="3">mVP24</shortName>
    </alternativeName>
</protein>
<feature type="chain" id="PRO_0000222156" description="Membrane-associated protein VP24">
    <location>
        <begin position="1"/>
        <end position="253"/>
    </location>
</feature>
<feature type="strand" evidence="6">
    <location>
        <begin position="3"/>
        <end position="5"/>
    </location>
</feature>
<feature type="turn" evidence="6">
    <location>
        <begin position="24"/>
        <end position="26"/>
    </location>
</feature>
<feature type="strand" evidence="6">
    <location>
        <begin position="31"/>
        <end position="34"/>
    </location>
</feature>
<feature type="strand" evidence="6">
    <location>
        <begin position="37"/>
        <end position="42"/>
    </location>
</feature>
<feature type="strand" evidence="6">
    <location>
        <begin position="45"/>
        <end position="51"/>
    </location>
</feature>
<feature type="helix" evidence="6">
    <location>
        <begin position="54"/>
        <end position="62"/>
    </location>
</feature>
<feature type="helix" evidence="6">
    <location>
        <begin position="67"/>
        <end position="69"/>
    </location>
</feature>
<feature type="helix" evidence="6">
    <location>
        <begin position="70"/>
        <end position="75"/>
    </location>
</feature>
<feature type="helix" evidence="6">
    <location>
        <begin position="77"/>
        <end position="80"/>
    </location>
</feature>
<feature type="strand" evidence="6">
    <location>
        <begin position="85"/>
        <end position="87"/>
    </location>
</feature>
<feature type="helix" evidence="6">
    <location>
        <begin position="90"/>
        <end position="101"/>
    </location>
</feature>
<feature type="helix" evidence="6">
    <location>
        <begin position="105"/>
        <end position="108"/>
    </location>
</feature>
<feature type="helix" evidence="6">
    <location>
        <begin position="113"/>
        <end position="128"/>
    </location>
</feature>
<feature type="turn" evidence="6">
    <location>
        <begin position="138"/>
        <end position="140"/>
    </location>
</feature>
<feature type="helix" evidence="6">
    <location>
        <begin position="147"/>
        <end position="164"/>
    </location>
</feature>
<feature type="strand" evidence="6">
    <location>
        <begin position="178"/>
        <end position="183"/>
    </location>
</feature>
<feature type="strand" evidence="6">
    <location>
        <begin position="186"/>
        <end position="193"/>
    </location>
</feature>
<feature type="strand" evidence="6">
    <location>
        <begin position="196"/>
        <end position="203"/>
    </location>
</feature>
<feature type="strand" evidence="6">
    <location>
        <begin position="205"/>
        <end position="207"/>
    </location>
</feature>
<feature type="strand" evidence="6">
    <location>
        <begin position="218"/>
        <end position="225"/>
    </location>
</feature>
<feature type="helix" evidence="6">
    <location>
        <begin position="226"/>
        <end position="230"/>
    </location>
</feature>
<feature type="turn" evidence="6">
    <location>
        <begin position="231"/>
        <end position="233"/>
    </location>
</feature>
<feature type="strand" evidence="6">
    <location>
        <begin position="234"/>
        <end position="236"/>
    </location>
</feature>
<accession>P35256</accession>
<accession>Q38L40</accession>
<accession>Q6T6T8</accession>
<dbReference type="EMBL" id="Z12132">
    <property type="protein sequence ID" value="CAA78119.1"/>
    <property type="molecule type" value="mRNA"/>
</dbReference>
<dbReference type="EMBL" id="AY430365">
    <property type="protein sequence ID" value="AAR85465.1"/>
    <property type="molecule type" value="Genomic_RNA"/>
</dbReference>
<dbReference type="EMBL" id="AY430366">
    <property type="protein sequence ID" value="AAR85458.1"/>
    <property type="molecule type" value="Genomic_RNA"/>
</dbReference>
<dbReference type="EMBL" id="DQ217792">
    <property type="protein sequence ID" value="ABA87129.1"/>
    <property type="molecule type" value="Genomic_RNA"/>
</dbReference>
<dbReference type="RefSeq" id="YP_001531158.1">
    <property type="nucleotide sequence ID" value="NC_001608.3"/>
</dbReference>
<dbReference type="PDB" id="4OR8">
    <property type="method" value="X-ray"/>
    <property type="resolution" value="2.65 A"/>
    <property type="chains" value="A/B=1-253"/>
</dbReference>
<dbReference type="PDBsum" id="4OR8"/>
<dbReference type="EMDB" id="EMD-3875"/>
<dbReference type="SMR" id="P35256"/>
<dbReference type="IntAct" id="P35256">
    <property type="interactions" value="23"/>
</dbReference>
<dbReference type="DNASU" id="920943"/>
<dbReference type="GeneID" id="920943"/>
<dbReference type="KEGG" id="vg:920943"/>
<dbReference type="Proteomes" id="UP000007771">
    <property type="component" value="Genome"/>
</dbReference>
<dbReference type="Proteomes" id="UP000137266">
    <property type="component" value="Genome"/>
</dbReference>
<dbReference type="Proteomes" id="UP000160614">
    <property type="component" value="Genome"/>
</dbReference>
<dbReference type="Proteomes" id="UP000180448">
    <property type="component" value="Segment"/>
</dbReference>
<dbReference type="GO" id="GO:0033645">
    <property type="term" value="C:host cell endomembrane system"/>
    <property type="evidence" value="ECO:0007669"/>
    <property type="project" value="UniProtKB-SubCell"/>
</dbReference>
<dbReference type="GO" id="GO:0020002">
    <property type="term" value="C:host cell plasma membrane"/>
    <property type="evidence" value="ECO:0007669"/>
    <property type="project" value="UniProtKB-SubCell"/>
</dbReference>
<dbReference type="GO" id="GO:0016020">
    <property type="term" value="C:membrane"/>
    <property type="evidence" value="ECO:0007669"/>
    <property type="project" value="UniProtKB-KW"/>
</dbReference>
<dbReference type="GO" id="GO:0019013">
    <property type="term" value="C:viral nucleocapsid"/>
    <property type="evidence" value="ECO:0000314"/>
    <property type="project" value="CACAO"/>
</dbReference>
<dbReference type="GO" id="GO:0055036">
    <property type="term" value="C:virion membrane"/>
    <property type="evidence" value="ECO:0007669"/>
    <property type="project" value="UniProtKB-SubCell"/>
</dbReference>
<dbReference type="GO" id="GO:0039660">
    <property type="term" value="F:structural constituent of virion"/>
    <property type="evidence" value="ECO:0007669"/>
    <property type="project" value="UniProtKB-KW"/>
</dbReference>
<dbReference type="GO" id="GO:0016032">
    <property type="term" value="P:viral process"/>
    <property type="evidence" value="ECO:0007669"/>
    <property type="project" value="InterPro"/>
</dbReference>
<dbReference type="InterPro" id="IPR009433">
    <property type="entry name" value="Filo_VP24"/>
</dbReference>
<dbReference type="Pfam" id="PF06389">
    <property type="entry name" value="Filo_VP24"/>
    <property type="match status" value="1"/>
</dbReference>
<dbReference type="PIRSF" id="PIRSF011355">
    <property type="entry name" value="VP24"/>
    <property type="match status" value="1"/>
</dbReference>
<name>VP24_MABVM</name>
<organismHost>
    <name type="scientific">Chlorocebus aethiops</name>
    <name type="common">Green monkey</name>
    <name type="synonym">Cercopithecus aethiops</name>
    <dbReference type="NCBI Taxonomy" id="9534"/>
</organismHost>
<organismHost>
    <name type="scientific">Homo sapiens</name>
    <name type="common">Human</name>
    <dbReference type="NCBI Taxonomy" id="9606"/>
</organismHost>
<organismHost>
    <name type="scientific">Rousettus aegyptiacus</name>
    <name type="common">Egyptian fruit bat</name>
    <name type="synonym">Pteropus aegyptiacus</name>
    <dbReference type="NCBI Taxonomy" id="9407"/>
</organismHost>
<organism>
    <name type="scientific">Lake Victoria marburgvirus (strain Musoke-80)</name>
    <name type="common">MARV</name>
    <name type="synonym">Marburg virus (strain Kenya/Musoke/1980)</name>
    <dbReference type="NCBI Taxonomy" id="33727"/>
    <lineage>
        <taxon>Viruses</taxon>
        <taxon>Riboviria</taxon>
        <taxon>Orthornavirae</taxon>
        <taxon>Negarnaviricota</taxon>
        <taxon>Haploviricotina</taxon>
        <taxon>Monjiviricetes</taxon>
        <taxon>Mononegavirales</taxon>
        <taxon>Filoviridae</taxon>
        <taxon>Orthomarburgvirus</taxon>
        <taxon>Orthomarburgvirus marburgense</taxon>
    </lineage>
</organism>
<gene>
    <name type="primary">VP24</name>
</gene>
<comment type="function">
    <text evidence="1 2">May act as a minor matrix protein that plays a role in assembly of viral nucleocapsid and virion budding (PubMed:16227263). Unlike Ebola VP24, mVP24 has no measurable impact of host dendritic cell function (PubMed:26962215).</text>
</comment>
<comment type="subunit">
    <text evidence="1 4">Monomer or homotetramer (Potential). Interacts with nucleoprotein.</text>
</comment>
<comment type="subcellular location">
    <subcellularLocation>
        <location evidence="1">Virion membrane</location>
        <topology evidence="1">Peripheral membrane protein</topology>
    </subcellularLocation>
    <subcellularLocation>
        <location evidence="1">Host cell membrane</location>
        <topology evidence="1">Peripheral membrane protein</topology>
        <orientation evidence="1">Cytoplasmic side</orientation>
    </subcellularLocation>
    <subcellularLocation>
        <location evidence="1">Host endomembrane system</location>
        <topology evidence="1">Peripheral membrane protein</topology>
    </subcellularLocation>
    <text>In virion, localizes on the intravirional side of the membrane. In the host cell, it is found associated with virus-induced membrane proliferation foci and to the plasma membrane where budding takes place.</text>
</comment>
<comment type="similarity">
    <text evidence="4">Belongs to the filoviridae membrane-associated protein VP24 family.</text>
</comment>